<organism>
    <name type="scientific">Corynebacterium diphtheriae (strain ATCC 700971 / NCTC 13129 / Biotype gravis)</name>
    <dbReference type="NCBI Taxonomy" id="257309"/>
    <lineage>
        <taxon>Bacteria</taxon>
        <taxon>Bacillati</taxon>
        <taxon>Actinomycetota</taxon>
        <taxon>Actinomycetes</taxon>
        <taxon>Mycobacteriales</taxon>
        <taxon>Corynebacteriaceae</taxon>
        <taxon>Corynebacterium</taxon>
    </lineage>
</organism>
<comment type="function">
    <text evidence="1">The RuvA-RuvB-RuvC complex processes Holliday junction (HJ) DNA during genetic recombination and DNA repair, while the RuvA-RuvB complex plays an important role in the rescue of blocked DNA replication forks via replication fork reversal (RFR). RuvA specifically binds to HJ cruciform DNA, conferring on it an open structure. The RuvB hexamer acts as an ATP-dependent pump, pulling dsDNA into and through the RuvAB complex. HJ branch migration allows RuvC to scan DNA until it finds its consensus sequence, where it cleaves and resolves the cruciform DNA.</text>
</comment>
<comment type="subunit">
    <text evidence="1">Homotetramer. Forms an RuvA(8)-RuvB(12)-Holliday junction (HJ) complex. HJ DNA is sandwiched between 2 RuvA tetramers; dsDNA enters through RuvA and exits via RuvB. An RuvB hexamer assembles on each DNA strand where it exits the tetramer. Each RuvB hexamer is contacted by two RuvA subunits (via domain III) on 2 adjacent RuvB subunits; this complex drives branch migration. In the full resolvosome a probable DNA-RuvA(4)-RuvB(12)-RuvC(2) complex forms which resolves the HJ.</text>
</comment>
<comment type="subcellular location">
    <subcellularLocation>
        <location evidence="1">Cytoplasm</location>
    </subcellularLocation>
</comment>
<comment type="domain">
    <text evidence="1">Has three domains with a flexible linker between the domains II and III and assumes an 'L' shape. Domain III is highly mobile and contacts RuvB.</text>
</comment>
<comment type="similarity">
    <text evidence="1">Belongs to the RuvA family.</text>
</comment>
<gene>
    <name evidence="1" type="primary">ruvA</name>
    <name type="ordered locus">DIP1376</name>
</gene>
<protein>
    <recommendedName>
        <fullName evidence="1">Holliday junction branch migration complex subunit RuvA</fullName>
    </recommendedName>
</protein>
<evidence type="ECO:0000255" key="1">
    <source>
        <dbReference type="HAMAP-Rule" id="MF_00031"/>
    </source>
</evidence>
<reference key="1">
    <citation type="journal article" date="2003" name="Nucleic Acids Res.">
        <title>The complete genome sequence and analysis of Corynebacterium diphtheriae NCTC13129.</title>
        <authorList>
            <person name="Cerdeno-Tarraga A.-M."/>
            <person name="Efstratiou A."/>
            <person name="Dover L.G."/>
            <person name="Holden M.T.G."/>
            <person name="Pallen M.J."/>
            <person name="Bentley S.D."/>
            <person name="Besra G.S."/>
            <person name="Churcher C.M."/>
            <person name="James K.D."/>
            <person name="De Zoysa A."/>
            <person name="Chillingworth T."/>
            <person name="Cronin A."/>
            <person name="Dowd L."/>
            <person name="Feltwell T."/>
            <person name="Hamlin N."/>
            <person name="Holroyd S."/>
            <person name="Jagels K."/>
            <person name="Moule S."/>
            <person name="Quail M.A."/>
            <person name="Rabbinowitsch E."/>
            <person name="Rutherford K.M."/>
            <person name="Thomson N.R."/>
            <person name="Unwin L."/>
            <person name="Whitehead S."/>
            <person name="Barrell B.G."/>
            <person name="Parkhill J."/>
        </authorList>
    </citation>
    <scope>NUCLEOTIDE SEQUENCE [LARGE SCALE GENOMIC DNA]</scope>
    <source>
        <strain>ATCC 700971 / NCTC 13129 / Biotype gravis</strain>
    </source>
</reference>
<dbReference type="EMBL" id="BX248358">
    <property type="protein sequence ID" value="CAE49907.1"/>
    <property type="molecule type" value="Genomic_DNA"/>
</dbReference>
<dbReference type="RefSeq" id="WP_010935021.1">
    <property type="nucleotide sequence ID" value="NC_002935.2"/>
</dbReference>
<dbReference type="SMR" id="Q6NGX4"/>
<dbReference type="STRING" id="257309.DIP1376"/>
<dbReference type="KEGG" id="cdi:DIP1376"/>
<dbReference type="HOGENOM" id="CLU_087936_2_1_11"/>
<dbReference type="Proteomes" id="UP000002198">
    <property type="component" value="Chromosome"/>
</dbReference>
<dbReference type="GO" id="GO:0005737">
    <property type="term" value="C:cytoplasm"/>
    <property type="evidence" value="ECO:0007669"/>
    <property type="project" value="UniProtKB-SubCell"/>
</dbReference>
<dbReference type="GO" id="GO:0009379">
    <property type="term" value="C:Holliday junction helicase complex"/>
    <property type="evidence" value="ECO:0007669"/>
    <property type="project" value="InterPro"/>
</dbReference>
<dbReference type="GO" id="GO:0048476">
    <property type="term" value="C:Holliday junction resolvase complex"/>
    <property type="evidence" value="ECO:0007669"/>
    <property type="project" value="UniProtKB-UniRule"/>
</dbReference>
<dbReference type="GO" id="GO:0005524">
    <property type="term" value="F:ATP binding"/>
    <property type="evidence" value="ECO:0007669"/>
    <property type="project" value="InterPro"/>
</dbReference>
<dbReference type="GO" id="GO:0000400">
    <property type="term" value="F:four-way junction DNA binding"/>
    <property type="evidence" value="ECO:0007669"/>
    <property type="project" value="UniProtKB-UniRule"/>
</dbReference>
<dbReference type="GO" id="GO:0009378">
    <property type="term" value="F:four-way junction helicase activity"/>
    <property type="evidence" value="ECO:0007669"/>
    <property type="project" value="InterPro"/>
</dbReference>
<dbReference type="GO" id="GO:0006310">
    <property type="term" value="P:DNA recombination"/>
    <property type="evidence" value="ECO:0007669"/>
    <property type="project" value="UniProtKB-UniRule"/>
</dbReference>
<dbReference type="GO" id="GO:0006281">
    <property type="term" value="P:DNA repair"/>
    <property type="evidence" value="ECO:0007669"/>
    <property type="project" value="UniProtKB-UniRule"/>
</dbReference>
<dbReference type="CDD" id="cd14332">
    <property type="entry name" value="UBA_RuvA_C"/>
    <property type="match status" value="1"/>
</dbReference>
<dbReference type="Gene3D" id="1.10.150.20">
    <property type="entry name" value="5' to 3' exonuclease, C-terminal subdomain"/>
    <property type="match status" value="1"/>
</dbReference>
<dbReference type="Gene3D" id="1.10.8.10">
    <property type="entry name" value="DNA helicase RuvA subunit, C-terminal domain"/>
    <property type="match status" value="1"/>
</dbReference>
<dbReference type="Gene3D" id="2.40.50.140">
    <property type="entry name" value="Nucleic acid-binding proteins"/>
    <property type="match status" value="1"/>
</dbReference>
<dbReference type="HAMAP" id="MF_00031">
    <property type="entry name" value="DNA_HJ_migration_RuvA"/>
    <property type="match status" value="1"/>
</dbReference>
<dbReference type="InterPro" id="IPR013849">
    <property type="entry name" value="DNA_helicase_Holl-junc_RuvA_I"/>
</dbReference>
<dbReference type="InterPro" id="IPR012340">
    <property type="entry name" value="NA-bd_OB-fold"/>
</dbReference>
<dbReference type="InterPro" id="IPR000085">
    <property type="entry name" value="RuvA"/>
</dbReference>
<dbReference type="InterPro" id="IPR010994">
    <property type="entry name" value="RuvA_2-like"/>
</dbReference>
<dbReference type="InterPro" id="IPR011114">
    <property type="entry name" value="RuvA_C"/>
</dbReference>
<dbReference type="InterPro" id="IPR036267">
    <property type="entry name" value="RuvA_C_sf"/>
</dbReference>
<dbReference type="NCBIfam" id="TIGR00084">
    <property type="entry name" value="ruvA"/>
    <property type="match status" value="1"/>
</dbReference>
<dbReference type="Pfam" id="PF14520">
    <property type="entry name" value="HHH_5"/>
    <property type="match status" value="1"/>
</dbReference>
<dbReference type="Pfam" id="PF07499">
    <property type="entry name" value="RuvA_C"/>
    <property type="match status" value="1"/>
</dbReference>
<dbReference type="Pfam" id="PF01330">
    <property type="entry name" value="RuvA_N"/>
    <property type="match status" value="1"/>
</dbReference>
<dbReference type="SUPFAM" id="SSF46929">
    <property type="entry name" value="DNA helicase RuvA subunit, C-terminal domain"/>
    <property type="match status" value="1"/>
</dbReference>
<dbReference type="SUPFAM" id="SSF50249">
    <property type="entry name" value="Nucleic acid-binding proteins"/>
    <property type="match status" value="1"/>
</dbReference>
<dbReference type="SUPFAM" id="SSF47781">
    <property type="entry name" value="RuvA domain 2-like"/>
    <property type="match status" value="1"/>
</dbReference>
<feature type="chain" id="PRO_0000224858" description="Holliday junction branch migration complex subunit RuvA">
    <location>
        <begin position="1"/>
        <end position="203"/>
    </location>
</feature>
<feature type="region of interest" description="Domain I" evidence="1">
    <location>
        <begin position="1"/>
        <end position="63"/>
    </location>
</feature>
<feature type="region of interest" description="Domain II" evidence="1">
    <location>
        <begin position="64"/>
        <end position="142"/>
    </location>
</feature>
<feature type="region of interest" description="Flexible linker" evidence="1">
    <location>
        <begin position="143"/>
        <end position="150"/>
    </location>
</feature>
<feature type="region of interest" description="Domain III" evidence="1">
    <location>
        <begin position="150"/>
        <end position="203"/>
    </location>
</feature>
<accession>Q6NGX4</accession>
<keyword id="KW-0963">Cytoplasm</keyword>
<keyword id="KW-0227">DNA damage</keyword>
<keyword id="KW-0233">DNA recombination</keyword>
<keyword id="KW-0234">DNA repair</keyword>
<keyword id="KW-0238">DNA-binding</keyword>
<keyword id="KW-1185">Reference proteome</keyword>
<proteinExistence type="inferred from homology"/>
<name>RUVA_CORDI</name>
<sequence>MIVSLRGTVESIGLGSAVIECNGVGYEVLAAPTTLGRLTRGEQARVLTTMVVREESQTLYGFTDDASRRMFVLLQSVSGLGPKLALAAQSVFTTEDIARHIAGGDAKALQKIPGVGKRMAERMIVDLKDKVVGFNDGIPAAAQPQLSIAVDQAVQEQVLEALVGLGFSEKIALPVLSRVLRDSPELSKSQALRAALSELGTKN</sequence>